<evidence type="ECO:0000255" key="1">
    <source>
        <dbReference type="HAMAP-Rule" id="MF_00294"/>
    </source>
</evidence>
<evidence type="ECO:0000305" key="2"/>
<proteinExistence type="inferred from homology"/>
<reference key="1">
    <citation type="submission" date="2007-03" db="EMBL/GenBank/DDBJ databases">
        <title>Genome sequence of Rhodospirillum centenum.</title>
        <authorList>
            <person name="Touchman J.W."/>
            <person name="Bauer C."/>
            <person name="Blankenship R.E."/>
        </authorList>
    </citation>
    <scope>NUCLEOTIDE SEQUENCE [LARGE SCALE GENOMIC DNA]</scope>
    <source>
        <strain>ATCC 51521 / SW</strain>
    </source>
</reference>
<comment type="similarity">
    <text evidence="1">Belongs to the bacterial ribosomal protein bL33 family.</text>
</comment>
<name>RL33_RHOCS</name>
<keyword id="KW-1185">Reference proteome</keyword>
<keyword id="KW-0687">Ribonucleoprotein</keyword>
<keyword id="KW-0689">Ribosomal protein</keyword>
<protein>
    <recommendedName>
        <fullName evidence="1">Large ribosomal subunit protein bL33</fullName>
    </recommendedName>
    <alternativeName>
        <fullName evidence="2">50S ribosomal protein L33</fullName>
    </alternativeName>
</protein>
<feature type="chain" id="PRO_1000204915" description="Large ribosomal subunit protein bL33">
    <location>
        <begin position="1"/>
        <end position="55"/>
    </location>
</feature>
<gene>
    <name evidence="1" type="primary">rpmG</name>
    <name type="ordered locus">RC1_1531</name>
</gene>
<organism>
    <name type="scientific">Rhodospirillum centenum (strain ATCC 51521 / SW)</name>
    <dbReference type="NCBI Taxonomy" id="414684"/>
    <lineage>
        <taxon>Bacteria</taxon>
        <taxon>Pseudomonadati</taxon>
        <taxon>Pseudomonadota</taxon>
        <taxon>Alphaproteobacteria</taxon>
        <taxon>Rhodospirillales</taxon>
        <taxon>Rhodospirillaceae</taxon>
        <taxon>Rhodospirillum</taxon>
    </lineage>
</organism>
<dbReference type="EMBL" id="CP000613">
    <property type="protein sequence ID" value="ACI98935.1"/>
    <property type="molecule type" value="Genomic_DNA"/>
</dbReference>
<dbReference type="RefSeq" id="WP_012566721.1">
    <property type="nucleotide sequence ID" value="NC_011420.2"/>
</dbReference>
<dbReference type="SMR" id="B6IN38"/>
<dbReference type="STRING" id="414684.RC1_1531"/>
<dbReference type="KEGG" id="rce:RC1_1531"/>
<dbReference type="eggNOG" id="COG0267">
    <property type="taxonomic scope" value="Bacteria"/>
</dbReference>
<dbReference type="HOGENOM" id="CLU_190949_1_1_5"/>
<dbReference type="OrthoDB" id="21586at2"/>
<dbReference type="Proteomes" id="UP000001591">
    <property type="component" value="Chromosome"/>
</dbReference>
<dbReference type="GO" id="GO:0005737">
    <property type="term" value="C:cytoplasm"/>
    <property type="evidence" value="ECO:0007669"/>
    <property type="project" value="UniProtKB-ARBA"/>
</dbReference>
<dbReference type="GO" id="GO:0015934">
    <property type="term" value="C:large ribosomal subunit"/>
    <property type="evidence" value="ECO:0007669"/>
    <property type="project" value="TreeGrafter"/>
</dbReference>
<dbReference type="GO" id="GO:0003735">
    <property type="term" value="F:structural constituent of ribosome"/>
    <property type="evidence" value="ECO:0007669"/>
    <property type="project" value="InterPro"/>
</dbReference>
<dbReference type="GO" id="GO:0006412">
    <property type="term" value="P:translation"/>
    <property type="evidence" value="ECO:0007669"/>
    <property type="project" value="UniProtKB-UniRule"/>
</dbReference>
<dbReference type="Gene3D" id="2.20.28.120">
    <property type="entry name" value="Ribosomal protein L33"/>
    <property type="match status" value="1"/>
</dbReference>
<dbReference type="HAMAP" id="MF_00294">
    <property type="entry name" value="Ribosomal_bL33"/>
    <property type="match status" value="1"/>
</dbReference>
<dbReference type="InterPro" id="IPR001705">
    <property type="entry name" value="Ribosomal_bL33"/>
</dbReference>
<dbReference type="InterPro" id="IPR018264">
    <property type="entry name" value="Ribosomal_bL33_CS"/>
</dbReference>
<dbReference type="InterPro" id="IPR038584">
    <property type="entry name" value="Ribosomal_bL33_sf"/>
</dbReference>
<dbReference type="InterPro" id="IPR011332">
    <property type="entry name" value="Ribosomal_zn-bd"/>
</dbReference>
<dbReference type="NCBIfam" id="NF001860">
    <property type="entry name" value="PRK00595.1"/>
    <property type="match status" value="1"/>
</dbReference>
<dbReference type="NCBIfam" id="TIGR01023">
    <property type="entry name" value="rpmG_bact"/>
    <property type="match status" value="1"/>
</dbReference>
<dbReference type="PANTHER" id="PTHR15238">
    <property type="entry name" value="54S RIBOSOMAL PROTEIN L39, MITOCHONDRIAL"/>
    <property type="match status" value="1"/>
</dbReference>
<dbReference type="PANTHER" id="PTHR15238:SF1">
    <property type="entry name" value="LARGE RIBOSOMAL SUBUNIT PROTEIN BL33M"/>
    <property type="match status" value="1"/>
</dbReference>
<dbReference type="Pfam" id="PF00471">
    <property type="entry name" value="Ribosomal_L33"/>
    <property type="match status" value="1"/>
</dbReference>
<dbReference type="SUPFAM" id="SSF57829">
    <property type="entry name" value="Zn-binding ribosomal proteins"/>
    <property type="match status" value="1"/>
</dbReference>
<dbReference type="PROSITE" id="PS00582">
    <property type="entry name" value="RIBOSOMAL_L33"/>
    <property type="match status" value="1"/>
</dbReference>
<sequence>MAKQNTVLIKLVSSADTGFFYVKKKNPRKTTEKLEFKKYDPVARKHVVFKEAKMK</sequence>
<accession>B6IN38</accession>